<organism>
    <name type="scientific">Rhodobacter capsulatus</name>
    <name type="common">Rhodopseudomonas capsulata</name>
    <dbReference type="NCBI Taxonomy" id="1061"/>
    <lineage>
        <taxon>Bacteria</taxon>
        <taxon>Pseudomonadati</taxon>
        <taxon>Pseudomonadota</taxon>
        <taxon>Alphaproteobacteria</taxon>
        <taxon>Rhodobacterales</taxon>
        <taxon>Rhodobacter group</taxon>
        <taxon>Rhodobacter</taxon>
    </lineage>
</organism>
<feature type="chain" id="PRO_0000167067" description="Nicotinate-nucleotide--dimethylbenzimidazole phosphoribosyltransferase">
    <location>
        <begin position="1"/>
        <end position="116"/>
    </location>
</feature>
<feature type="non-terminal residue">
    <location>
        <position position="116"/>
    </location>
</feature>
<sequence>MLQLNSFAEISTLADRLPVADEAARAAALARQNSLTKPVGSLGRLEELSLHWAAWRATERPTITKPQALCFAGNHGVCAQGVNVFPQEVTHLMVKNFEMGGAAINQLCRAAGADLQ</sequence>
<accession>P0CY58</accession>
<accession>O68087</accession>
<accession>Q52679</accession>
<dbReference type="EC" id="2.4.2.21"/>
<dbReference type="EMBL" id="Z46611">
    <property type="protein sequence ID" value="CAA86577.1"/>
    <property type="molecule type" value="Genomic_DNA"/>
</dbReference>
<dbReference type="PIR" id="S52219">
    <property type="entry name" value="S52219"/>
</dbReference>
<dbReference type="SMR" id="P0CY58"/>
<dbReference type="UniPathway" id="UPA00061">
    <property type="reaction ID" value="UER00516"/>
</dbReference>
<dbReference type="GO" id="GO:0008939">
    <property type="term" value="F:nicotinate-nucleotide-dimethylbenzimidazole phosphoribosyltransferase activity"/>
    <property type="evidence" value="ECO:0007669"/>
    <property type="project" value="UniProtKB-EC"/>
</dbReference>
<dbReference type="GO" id="GO:0009236">
    <property type="term" value="P:cobalamin biosynthetic process"/>
    <property type="evidence" value="ECO:0007669"/>
    <property type="project" value="UniProtKB-KW"/>
</dbReference>
<dbReference type="Gene3D" id="1.10.1610.10">
    <property type="match status" value="1"/>
</dbReference>
<dbReference type="Gene3D" id="3.40.50.10210">
    <property type="match status" value="1"/>
</dbReference>
<dbReference type="InterPro" id="IPR003200">
    <property type="entry name" value="Nict_dMeBzImd_PRibTrfase"/>
</dbReference>
<dbReference type="InterPro" id="IPR023195">
    <property type="entry name" value="Nict_dMeBzImd_PRibTrfase_N"/>
</dbReference>
<dbReference type="InterPro" id="IPR036087">
    <property type="entry name" value="Nict_dMeBzImd_PRibTrfase_sf"/>
</dbReference>
<dbReference type="PANTHER" id="PTHR43463">
    <property type="entry name" value="NICOTINATE-NUCLEOTIDE--DIMETHYLBENZIMIDAZOLE PHOSPHORIBOSYLTRANSFERASE"/>
    <property type="match status" value="1"/>
</dbReference>
<dbReference type="PANTHER" id="PTHR43463:SF1">
    <property type="entry name" value="NICOTINATE-NUCLEOTIDE--DIMETHYLBENZIMIDAZOLE PHOSPHORIBOSYLTRANSFERASE"/>
    <property type="match status" value="1"/>
</dbReference>
<dbReference type="Pfam" id="PF02277">
    <property type="entry name" value="DBI_PRT"/>
    <property type="match status" value="1"/>
</dbReference>
<dbReference type="SUPFAM" id="SSF52733">
    <property type="entry name" value="Nicotinate mononucleotide:5,6-dimethylbenzimidazole phosphoribosyltransferase (CobT)"/>
    <property type="match status" value="1"/>
</dbReference>
<evidence type="ECO:0000250" key="1"/>
<evidence type="ECO:0000305" key="2"/>
<comment type="function">
    <text evidence="1">Catalyzes the synthesis of alpha-ribazole-5'-phosphate from nicotinate mononucleotide (NAMN) and 5,6-dimethylbenzimidazole (DMB).</text>
</comment>
<comment type="catalytic activity">
    <reaction>
        <text>5,6-dimethylbenzimidazole + nicotinate beta-D-ribonucleotide = alpha-ribazole 5'-phosphate + nicotinate + H(+)</text>
        <dbReference type="Rhea" id="RHEA:11196"/>
        <dbReference type="ChEBI" id="CHEBI:15378"/>
        <dbReference type="ChEBI" id="CHEBI:15890"/>
        <dbReference type="ChEBI" id="CHEBI:32544"/>
        <dbReference type="ChEBI" id="CHEBI:57502"/>
        <dbReference type="ChEBI" id="CHEBI:57918"/>
        <dbReference type="EC" id="2.4.2.21"/>
    </reaction>
</comment>
<comment type="pathway">
    <text>Nucleoside biosynthesis; alpha-ribazole biosynthesis; alpha-ribazole from 5,6-dimethylbenzimidazole: step 1/2.</text>
</comment>
<comment type="similarity">
    <text evidence="2">Belongs to the CobT family.</text>
</comment>
<protein>
    <recommendedName>
        <fullName>Nicotinate-nucleotide--dimethylbenzimidazole phosphoribosyltransferase</fullName>
        <shortName>NN:DBI PRT</shortName>
        <ecNumber>2.4.2.21</ecNumber>
    </recommendedName>
    <alternativeName>
        <fullName>N(1)-alpha-phosphoribosyltransferase</fullName>
    </alternativeName>
</protein>
<gene>
    <name type="primary">cobT</name>
    <name type="synonym">cobU</name>
</gene>
<reference key="1">
    <citation type="journal article" date="1995" name="J. Bacteriol.">
        <title>Identification and sequence analysis of genes involved in late steps in cobalamin (vitamin B12) synthesis in Rhodobacter capsulatus.</title>
        <authorList>
            <person name="Pollich M."/>
            <person name="Klug G."/>
        </authorList>
    </citation>
    <scope>NUCLEOTIDE SEQUENCE [GENOMIC DNA]</scope>
    <source>
        <strain>ATCC 33303 / B10</strain>
    </source>
</reference>
<keyword id="KW-0169">Cobalamin biosynthesis</keyword>
<keyword id="KW-0328">Glycosyltransferase</keyword>
<keyword id="KW-0808">Transferase</keyword>
<name>COBT_RHOCA</name>
<proteinExistence type="inferred from homology"/>